<dbReference type="EC" id="3.2.2.22"/>
<dbReference type="GO" id="GO:0005576">
    <property type="term" value="C:extracellular region"/>
    <property type="evidence" value="ECO:0007669"/>
    <property type="project" value="UniProtKB-SubCell"/>
</dbReference>
<dbReference type="GO" id="GO:0005794">
    <property type="term" value="C:Golgi apparatus"/>
    <property type="evidence" value="ECO:0007669"/>
    <property type="project" value="UniProtKB-SubCell"/>
</dbReference>
<dbReference type="GO" id="GO:0005773">
    <property type="term" value="C:vacuole"/>
    <property type="evidence" value="ECO:0007669"/>
    <property type="project" value="UniProtKB-SubCell"/>
</dbReference>
<dbReference type="GO" id="GO:0030598">
    <property type="term" value="F:rRNA N-glycosylase activity"/>
    <property type="evidence" value="ECO:0007669"/>
    <property type="project" value="UniProtKB-EC"/>
</dbReference>
<dbReference type="GO" id="GO:0090729">
    <property type="term" value="F:toxin activity"/>
    <property type="evidence" value="ECO:0007669"/>
    <property type="project" value="UniProtKB-KW"/>
</dbReference>
<dbReference type="GO" id="GO:0006952">
    <property type="term" value="P:defense response"/>
    <property type="evidence" value="ECO:0007669"/>
    <property type="project" value="UniProtKB-KW"/>
</dbReference>
<dbReference type="GO" id="GO:0017148">
    <property type="term" value="P:negative regulation of translation"/>
    <property type="evidence" value="ECO:0007669"/>
    <property type="project" value="UniProtKB-KW"/>
</dbReference>
<comment type="function">
    <text evidence="2">Nicks pBR322 dsDNA. Has adenine polynucleotide glycosidase activity on herring sperm ssDNA.</text>
</comment>
<comment type="catalytic activity">
    <reaction evidence="2">
        <text>Endohydrolysis of the N-glycosidic bond at one specific adenosine on the 28S rRNA.</text>
        <dbReference type="EC" id="3.2.2.22"/>
    </reaction>
</comment>
<comment type="subcellular location">
    <subcellularLocation>
        <location evidence="2">Secreted</location>
        <location evidence="2">Extracellular space</location>
    </subcellularLocation>
    <subcellularLocation>
        <location evidence="2">Golgi apparatus</location>
    </subcellularLocation>
    <subcellularLocation>
        <location evidence="2">Vacuole</location>
    </subcellularLocation>
</comment>
<comment type="developmental stage">
    <text evidence="2">Detected in fully expanded leaves of 8 to 34 month old plants, levels peak in autumn. Also present in developing leaves of adult plants, detected in 10 and 17 day old leaves but not in 25, 40 or 60 day old leaves.</text>
</comment>
<comment type="mass spectrometry"/>
<comment type="similarity">
    <text evidence="1">Belongs to the ribosome-inactivating protein family. Type 1 RIP subfamily.</text>
</comment>
<proteinExistence type="evidence at protein level"/>
<protein>
    <recommendedName>
        <fullName>Dioicin-1</fullName>
        <ecNumber>3.2.2.22</ecNumber>
    </recommendedName>
    <alternativeName>
        <fullName evidence="3">Ribosome-inactivating protein</fullName>
    </alternativeName>
    <alternativeName>
        <fullName evidence="3">rRNA N-glycosidase</fullName>
    </alternativeName>
</protein>
<sequence>ANIVFDVESATTGTYSTFLTSF</sequence>
<reference evidence="4" key="1">
    <citation type="journal article" date="2008" name="Planta">
        <title>Type 1 ribosome-inactivating proteins from Phytolacca dioica L. leaves: differential seasonal and age expression, and cellular localization.</title>
        <authorList>
            <person name="Parente A."/>
            <person name="Conforto B."/>
            <person name="Di Maro A."/>
            <person name="Chambery A."/>
            <person name="De Luca P."/>
            <person name="Bolognesi A."/>
            <person name="Iriti M."/>
            <person name="Faoro F."/>
        </authorList>
    </citation>
    <scope>PROTEIN SEQUENCE</scope>
    <scope>CATALYTIC ACTIVITY</scope>
    <scope>SUBCELLULAR LOCATION</scope>
    <scope>DEVELOPMENTAL STAGE</scope>
    <scope>MASS SPECTROMETRY</scope>
    <source>
        <tissue evidence="2">Leaf</tissue>
    </source>
</reference>
<keyword id="KW-0903">Direct protein sequencing</keyword>
<keyword id="KW-0333">Golgi apparatus</keyword>
<keyword id="KW-0378">Hydrolase</keyword>
<keyword id="KW-0611">Plant defense</keyword>
<keyword id="KW-0652">Protein synthesis inhibitor</keyword>
<keyword id="KW-0964">Secreted</keyword>
<keyword id="KW-0800">Toxin</keyword>
<keyword id="KW-0926">Vacuole</keyword>
<evidence type="ECO:0000255" key="1"/>
<evidence type="ECO:0000269" key="2">
    <source>
    </source>
</evidence>
<evidence type="ECO:0000303" key="3">
    <source>
    </source>
</evidence>
<evidence type="ECO:0000305" key="4"/>
<feature type="chain" id="PRO_0000372679" description="Dioicin-1">
    <location>
        <begin position="1"/>
        <end position="22" status="greater than"/>
    </location>
</feature>
<feature type="non-terminal residue" evidence="3">
    <location>
        <position position="22"/>
    </location>
</feature>
<organism>
    <name type="scientific">Phytolacca dioica</name>
    <name type="common">Bella sombra tree</name>
    <name type="synonym">Phytolacca arborea</name>
    <dbReference type="NCBI Taxonomy" id="29725"/>
    <lineage>
        <taxon>Eukaryota</taxon>
        <taxon>Viridiplantae</taxon>
        <taxon>Streptophyta</taxon>
        <taxon>Embryophyta</taxon>
        <taxon>Tracheophyta</taxon>
        <taxon>Spermatophyta</taxon>
        <taxon>Magnoliopsida</taxon>
        <taxon>eudicotyledons</taxon>
        <taxon>Gunneridae</taxon>
        <taxon>Pentapetalae</taxon>
        <taxon>Caryophyllales</taxon>
        <taxon>Phytolaccaceae</taxon>
        <taxon>Phytolacca</taxon>
    </lineage>
</organism>
<accession>P86144</accession>
<name>RIPD1_PHYDI</name>